<protein>
    <recommendedName>
        <fullName>Phosphatidylethanolamine-binding protein 2</fullName>
        <shortName>PEBP-2</shortName>
    </recommendedName>
</protein>
<gene>
    <name type="primary">Pbp2</name>
    <name type="synonym">Pebp2</name>
</gene>
<comment type="function">
    <text evidence="1">May bind to phospholipids. May act as serine protease inhibitor (By similarity).</text>
</comment>
<comment type="subcellular location">
    <subcellularLocation>
        <location evidence="3">Cytoplasm</location>
    </subcellularLocation>
    <text>At the cell periphery in pachytene spermatocytes and round spermatids, in the distal dorsal region of the sperm head and in the sperm tail.</text>
</comment>
<comment type="alternative products">
    <event type="alternative splicing"/>
    <isoform>
        <id>Q8VIN1-1</id>
        <name>1</name>
        <sequence type="displayed"/>
    </isoform>
    <isoform>
        <id>Q8VIN1-2</id>
        <name>2</name>
        <sequence type="described" ref="VSP_009738"/>
    </isoform>
</comment>
<comment type="tissue specificity">
    <text evidence="3">Testis specific.</text>
</comment>
<comment type="developmental stage">
    <text>First detected 14 day old testes, with the first appearance of stage IX pachytene spermatocytes. Highly expressed in stage X and XI pachytene and diplotene spermatocytes from day 18 to 22.</text>
</comment>
<comment type="similarity">
    <text evidence="5">Belongs to the phosphatidylethanolamine-binding protein family.</text>
</comment>
<sequence>MPTDMSMWTGPLSLHEVDEQPQHLLRVTYTEAEVEELGQVLTPTQVKHRPGSISWDGLDPGKLYTLILTDPDAPSRKKPVYREWHHFLVVNMKGNDISSGNVLSDYVGSGPPKGTGLHRYVWLVYQQDKPLRCDEPILTNRSGDHRGKFKTAAFRKKYHLGAPVAGTCYQAEWDSYVPKLYKQLSGK</sequence>
<accession>Q8VIN1</accession>
<accession>Q3KND5</accession>
<accession>Q8VIN0</accession>
<accession>Q9DA20</accession>
<dbReference type="EMBL" id="AF307146">
    <property type="protein sequence ID" value="AAL32290.1"/>
    <property type="molecule type" value="mRNA"/>
</dbReference>
<dbReference type="EMBL" id="AF307147">
    <property type="protein sequence ID" value="AAL32291.1"/>
    <property type="molecule type" value="mRNA"/>
</dbReference>
<dbReference type="EMBL" id="BC107334">
    <property type="protein sequence ID" value="AAI07335.1"/>
    <property type="molecule type" value="mRNA"/>
</dbReference>
<dbReference type="EMBL" id="BC107335">
    <property type="protein sequence ID" value="AAI07336.1"/>
    <property type="molecule type" value="mRNA"/>
</dbReference>
<dbReference type="CCDS" id="CCDS20646.1">
    <molecule id="Q8VIN1-1"/>
</dbReference>
<dbReference type="PDB" id="1KN3">
    <property type="method" value="X-ray"/>
    <property type="resolution" value="1.80 A"/>
    <property type="chains" value="A=5-187"/>
</dbReference>
<dbReference type="PDBsum" id="1KN3"/>
<dbReference type="SMR" id="Q8VIN1"/>
<dbReference type="FunCoup" id="Q8VIN1">
    <property type="interactions" value="13"/>
</dbReference>
<dbReference type="STRING" id="10090.ENSMUSP00000098414"/>
<dbReference type="MEROPS" id="I51.002"/>
<dbReference type="SwissPalm" id="Q8VIN1"/>
<dbReference type="jPOST" id="Q8VIN1"/>
<dbReference type="PaxDb" id="10090-ENSMUSP00000098414"/>
<dbReference type="PeptideAtlas" id="Q8VIN1"/>
<dbReference type="ProteomicsDB" id="301787">
    <molecule id="Q8VIN1-1"/>
</dbReference>
<dbReference type="ProteomicsDB" id="301788">
    <molecule id="Q8VIN1-2"/>
</dbReference>
<dbReference type="Pumba" id="Q8VIN1"/>
<dbReference type="AGR" id="MGI:1923650"/>
<dbReference type="MGI" id="MGI:1923650">
    <property type="gene designation" value="Pbp2"/>
</dbReference>
<dbReference type="eggNOG" id="KOG3346">
    <property type="taxonomic scope" value="Eukaryota"/>
</dbReference>
<dbReference type="InParanoid" id="Q8VIN1"/>
<dbReference type="OrthoDB" id="2506647at2759"/>
<dbReference type="PhylomeDB" id="Q8VIN1"/>
<dbReference type="ChiTaRS" id="Cbfb">
    <property type="organism name" value="mouse"/>
</dbReference>
<dbReference type="EvolutionaryTrace" id="Q8VIN1"/>
<dbReference type="PRO" id="PR:Q8VIN1"/>
<dbReference type="Proteomes" id="UP000000589">
    <property type="component" value="Unplaced"/>
</dbReference>
<dbReference type="RNAct" id="Q8VIN1">
    <property type="molecule type" value="protein"/>
</dbReference>
<dbReference type="GO" id="GO:0005737">
    <property type="term" value="C:cytoplasm"/>
    <property type="evidence" value="ECO:0007669"/>
    <property type="project" value="UniProtKB-SubCell"/>
</dbReference>
<dbReference type="GO" id="GO:0005524">
    <property type="term" value="F:ATP binding"/>
    <property type="evidence" value="ECO:0007669"/>
    <property type="project" value="UniProtKB-KW"/>
</dbReference>
<dbReference type="GO" id="GO:0008289">
    <property type="term" value="F:lipid binding"/>
    <property type="evidence" value="ECO:0007669"/>
    <property type="project" value="UniProtKB-KW"/>
</dbReference>
<dbReference type="GO" id="GO:0004867">
    <property type="term" value="F:serine-type endopeptidase inhibitor activity"/>
    <property type="evidence" value="ECO:0007669"/>
    <property type="project" value="UniProtKB-KW"/>
</dbReference>
<dbReference type="CDD" id="cd00866">
    <property type="entry name" value="PEBP_euk"/>
    <property type="match status" value="1"/>
</dbReference>
<dbReference type="FunFam" id="3.90.280.10:FF:000003">
    <property type="entry name" value="phosphatidylethanolamine-binding protein 1"/>
    <property type="match status" value="1"/>
</dbReference>
<dbReference type="Gene3D" id="3.90.280.10">
    <property type="entry name" value="PEBP-like"/>
    <property type="match status" value="1"/>
</dbReference>
<dbReference type="InterPro" id="IPR008914">
    <property type="entry name" value="PEBP"/>
</dbReference>
<dbReference type="InterPro" id="IPR036610">
    <property type="entry name" value="PEBP-like_sf"/>
</dbReference>
<dbReference type="InterPro" id="IPR035810">
    <property type="entry name" value="PEBP_euk"/>
</dbReference>
<dbReference type="InterPro" id="IPR001858">
    <property type="entry name" value="Phosphatidylethanolamine-bd_CS"/>
</dbReference>
<dbReference type="PANTHER" id="PTHR11362">
    <property type="entry name" value="PHOSPHATIDYLETHANOLAMINE-BINDING PROTEIN"/>
    <property type="match status" value="1"/>
</dbReference>
<dbReference type="PANTHER" id="PTHR11362:SF8">
    <property type="entry name" value="PHOSPHATIDYLETHANOLAMINE-BINDING PROTEIN 2"/>
    <property type="match status" value="1"/>
</dbReference>
<dbReference type="Pfam" id="PF01161">
    <property type="entry name" value="PBP"/>
    <property type="match status" value="1"/>
</dbReference>
<dbReference type="SUPFAM" id="SSF49777">
    <property type="entry name" value="PEBP-like"/>
    <property type="match status" value="1"/>
</dbReference>
<dbReference type="PROSITE" id="PS01220">
    <property type="entry name" value="PBP"/>
    <property type="match status" value="1"/>
</dbReference>
<organism>
    <name type="scientific">Mus musculus</name>
    <name type="common">Mouse</name>
    <dbReference type="NCBI Taxonomy" id="10090"/>
    <lineage>
        <taxon>Eukaryota</taxon>
        <taxon>Metazoa</taxon>
        <taxon>Chordata</taxon>
        <taxon>Craniata</taxon>
        <taxon>Vertebrata</taxon>
        <taxon>Euteleostomi</taxon>
        <taxon>Mammalia</taxon>
        <taxon>Eutheria</taxon>
        <taxon>Euarchontoglires</taxon>
        <taxon>Glires</taxon>
        <taxon>Rodentia</taxon>
        <taxon>Myomorpha</taxon>
        <taxon>Muroidea</taxon>
        <taxon>Muridae</taxon>
        <taxon>Murinae</taxon>
        <taxon>Mus</taxon>
        <taxon>Mus</taxon>
    </lineage>
</organism>
<feature type="chain" id="PRO_0000204747" description="Phosphatidylethanolamine-binding protein 2">
    <location>
        <begin position="1"/>
        <end position="187"/>
    </location>
</feature>
<feature type="modified residue" description="Phosphoserine" evidence="2">
    <location>
        <position position="13"/>
    </location>
</feature>
<feature type="modified residue" description="Phosphoserine" evidence="2">
    <location>
        <position position="52"/>
    </location>
</feature>
<feature type="modified residue" description="Phosphoserine" evidence="2">
    <location>
        <position position="54"/>
    </location>
</feature>
<feature type="splice variant" id="VSP_009738" description="In isoform 2." evidence="4">
    <location>
        <begin position="99"/>
        <end position="112"/>
    </location>
</feature>
<feature type="helix" evidence="6">
    <location>
        <begin position="14"/>
        <end position="16"/>
    </location>
</feature>
<feature type="strand" evidence="6">
    <location>
        <begin position="22"/>
        <end position="24"/>
    </location>
</feature>
<feature type="strand" evidence="6">
    <location>
        <begin position="26"/>
        <end position="29"/>
    </location>
</feature>
<feature type="strand" evidence="6">
    <location>
        <begin position="32"/>
        <end position="34"/>
    </location>
</feature>
<feature type="helix" evidence="6">
    <location>
        <begin position="43"/>
        <end position="46"/>
    </location>
</feature>
<feature type="strand" evidence="6">
    <location>
        <begin position="51"/>
        <end position="54"/>
    </location>
</feature>
<feature type="strand" evidence="6">
    <location>
        <begin position="62"/>
        <end position="70"/>
    </location>
</feature>
<feature type="strand" evidence="6">
    <location>
        <begin position="76"/>
        <end position="78"/>
    </location>
</feature>
<feature type="strand" evidence="6">
    <location>
        <begin position="84"/>
        <end position="93"/>
    </location>
</feature>
<feature type="helix" evidence="6">
    <location>
        <begin position="97"/>
        <end position="99"/>
    </location>
</feature>
<feature type="strand" evidence="6">
    <location>
        <begin position="100"/>
        <end position="104"/>
    </location>
</feature>
<feature type="strand" evidence="6">
    <location>
        <begin position="118"/>
        <end position="126"/>
    </location>
</feature>
<feature type="helix" evidence="6">
    <location>
        <begin position="151"/>
        <end position="157"/>
    </location>
</feature>
<feature type="strand" evidence="6">
    <location>
        <begin position="164"/>
        <end position="171"/>
    </location>
</feature>
<feature type="helix" evidence="6">
    <location>
        <begin position="177"/>
        <end position="183"/>
    </location>
</feature>
<proteinExistence type="evidence at protein level"/>
<name>PEBP2_MOUSE</name>
<keyword id="KW-0002">3D-structure</keyword>
<keyword id="KW-0025">Alternative splicing</keyword>
<keyword id="KW-0067">ATP-binding</keyword>
<keyword id="KW-0963">Cytoplasm</keyword>
<keyword id="KW-0446">Lipid-binding</keyword>
<keyword id="KW-0547">Nucleotide-binding</keyword>
<keyword id="KW-0597">Phosphoprotein</keyword>
<keyword id="KW-0646">Protease inhibitor</keyword>
<keyword id="KW-1185">Reference proteome</keyword>
<keyword id="KW-0722">Serine protease inhibitor</keyword>
<reference key="1">
    <citation type="journal article" date="2002" name="Biol. Reprod.">
        <title>Identification of a novel testis-specific member of the phosphatidylethanolamine binding protein family, pebp-2.</title>
        <authorList>
            <person name="Hickox D.M."/>
            <person name="Gibbs G."/>
            <person name="Morrison J.R."/>
            <person name="Sebire K."/>
            <person name="Edgar K."/>
            <person name="Keah H.-H."/>
            <person name="Alter K."/>
            <person name="Loveland K.L."/>
            <person name="Hearn M.T.W."/>
            <person name="de Kretser D.M."/>
            <person name="O'Bryan M.K."/>
        </authorList>
    </citation>
    <scope>NUCLEOTIDE SEQUENCE [MRNA] (ISOFORMS 1 AND 2)</scope>
    <scope>SUBCELLULAR LOCATION</scope>
    <scope>TISSUE SPECIFICITY</scope>
    <source>
        <strain>CD-1</strain>
        <tissue>Testis</tissue>
    </source>
</reference>
<reference key="2">
    <citation type="journal article" date="2004" name="Genome Res.">
        <title>The status, quality, and expansion of the NIH full-length cDNA project: the Mammalian Gene Collection (MGC).</title>
        <authorList>
            <consortium name="The MGC Project Team"/>
        </authorList>
    </citation>
    <scope>NUCLEOTIDE SEQUENCE [LARGE SCALE MRNA] (ISOFORM 1)</scope>
</reference>
<reference key="3">
    <citation type="journal article" date="2010" name="Cell">
        <title>A tissue-specific atlas of mouse protein phosphorylation and expression.</title>
        <authorList>
            <person name="Huttlin E.L."/>
            <person name="Jedrychowski M.P."/>
            <person name="Elias J.E."/>
            <person name="Goswami T."/>
            <person name="Rad R."/>
            <person name="Beausoleil S.A."/>
            <person name="Villen J."/>
            <person name="Haas W."/>
            <person name="Sowa M.E."/>
            <person name="Gygi S.P."/>
        </authorList>
    </citation>
    <scope>IDENTIFICATION BY MASS SPECTROMETRY [LARGE SCALE ANALYSIS]</scope>
    <source>
        <tissue>Testis</tissue>
    </source>
</reference>
<reference key="4">
    <citation type="journal article" date="2002" name="Acta Crystallogr. D">
        <title>The crystal structure of PEBP-2, a homologue of the PEBP/RKIP family.</title>
        <authorList>
            <person name="Simister P.C."/>
            <person name="Banfield M.J."/>
            <person name="Brady R.L."/>
        </authorList>
    </citation>
    <scope>X-RAY CRYSTALLOGRAPHY (1.8 ANGSTROMS) OF 6-185</scope>
</reference>
<evidence type="ECO:0000250" key="1"/>
<evidence type="ECO:0000250" key="2">
    <source>
        <dbReference type="UniProtKB" id="P31044"/>
    </source>
</evidence>
<evidence type="ECO:0000269" key="3">
    <source>
    </source>
</evidence>
<evidence type="ECO:0000303" key="4">
    <source>
    </source>
</evidence>
<evidence type="ECO:0000305" key="5"/>
<evidence type="ECO:0007829" key="6">
    <source>
        <dbReference type="PDB" id="1KN3"/>
    </source>
</evidence>